<protein>
    <recommendedName>
        <fullName>Asparagine synthetase [glutamine-hydrolyzing]</fullName>
        <ecNumber>6.3.5.4</ecNumber>
    </recommendedName>
    <alternativeName>
        <fullName>Cell cycle control protein TS11</fullName>
    </alternativeName>
    <alternativeName>
        <fullName>Glutamine-dependent asparagine synthetase</fullName>
    </alternativeName>
</protein>
<reference key="1">
    <citation type="journal article" date="1987" name="Mol. Cell. Biol.">
        <title>Isolation of human cDNAs for asparagine synthetase and expression in Jensen rat sarcoma cells.</title>
        <authorList>
            <person name="Andrulis I.L."/>
            <person name="Chen J."/>
            <person name="Ray P.N."/>
        </authorList>
    </citation>
    <scope>NUCLEOTIDE SEQUENCE [MRNA] (ISOFORM 1)</scope>
</reference>
<reference key="2">
    <citation type="journal article" date="1989" name="Genomics">
        <title>Molecular structure of the human asparagine synthetase gene.</title>
        <authorList>
            <person name="Zhang Y.P."/>
            <person name="Lambert M.A."/>
            <person name="Cairney A.E."/>
            <person name="Wills D."/>
            <person name="Ray P.N."/>
            <person name="Andrulis I.L."/>
        </authorList>
    </citation>
    <scope>NUCLEOTIDE SEQUENCE [GENOMIC DNA]</scope>
</reference>
<reference key="3">
    <citation type="submission" date="2003-05" db="EMBL/GenBank/DDBJ databases">
        <title>Cloning of human full-length CDSs in BD Creator(TM) system donor vector.</title>
        <authorList>
            <person name="Kalnine N."/>
            <person name="Chen X."/>
            <person name="Rolfs A."/>
            <person name="Halleck A."/>
            <person name="Hines L."/>
            <person name="Eisenstein S."/>
            <person name="Koundinya M."/>
            <person name="Raphael J."/>
            <person name="Moreira D."/>
            <person name="Kelley T."/>
            <person name="LaBaer J."/>
            <person name="Lin Y."/>
            <person name="Phelan M."/>
            <person name="Farmer A."/>
        </authorList>
    </citation>
    <scope>NUCLEOTIDE SEQUENCE [LARGE SCALE MRNA] (ISOFORM 1)</scope>
</reference>
<reference key="4">
    <citation type="journal article" date="2004" name="Nat. Genet.">
        <title>Complete sequencing and characterization of 21,243 full-length human cDNAs.</title>
        <authorList>
            <person name="Ota T."/>
            <person name="Suzuki Y."/>
            <person name="Nishikawa T."/>
            <person name="Otsuki T."/>
            <person name="Sugiyama T."/>
            <person name="Irie R."/>
            <person name="Wakamatsu A."/>
            <person name="Hayashi K."/>
            <person name="Sato H."/>
            <person name="Nagai K."/>
            <person name="Kimura K."/>
            <person name="Makita H."/>
            <person name="Sekine M."/>
            <person name="Obayashi M."/>
            <person name="Nishi T."/>
            <person name="Shibahara T."/>
            <person name="Tanaka T."/>
            <person name="Ishii S."/>
            <person name="Yamamoto J."/>
            <person name="Saito K."/>
            <person name="Kawai Y."/>
            <person name="Isono Y."/>
            <person name="Nakamura Y."/>
            <person name="Nagahari K."/>
            <person name="Murakami K."/>
            <person name="Yasuda T."/>
            <person name="Iwayanagi T."/>
            <person name="Wagatsuma M."/>
            <person name="Shiratori A."/>
            <person name="Sudo H."/>
            <person name="Hosoiri T."/>
            <person name="Kaku Y."/>
            <person name="Kodaira H."/>
            <person name="Kondo H."/>
            <person name="Sugawara M."/>
            <person name="Takahashi M."/>
            <person name="Kanda K."/>
            <person name="Yokoi T."/>
            <person name="Furuya T."/>
            <person name="Kikkawa E."/>
            <person name="Omura Y."/>
            <person name="Abe K."/>
            <person name="Kamihara K."/>
            <person name="Katsuta N."/>
            <person name="Sato K."/>
            <person name="Tanikawa M."/>
            <person name="Yamazaki M."/>
            <person name="Ninomiya K."/>
            <person name="Ishibashi T."/>
            <person name="Yamashita H."/>
            <person name="Murakawa K."/>
            <person name="Fujimori K."/>
            <person name="Tanai H."/>
            <person name="Kimata M."/>
            <person name="Watanabe M."/>
            <person name="Hiraoka S."/>
            <person name="Chiba Y."/>
            <person name="Ishida S."/>
            <person name="Ono Y."/>
            <person name="Takiguchi S."/>
            <person name="Watanabe S."/>
            <person name="Yosida M."/>
            <person name="Hotuta T."/>
            <person name="Kusano J."/>
            <person name="Kanehori K."/>
            <person name="Takahashi-Fujii A."/>
            <person name="Hara H."/>
            <person name="Tanase T.-O."/>
            <person name="Nomura Y."/>
            <person name="Togiya S."/>
            <person name="Komai F."/>
            <person name="Hara R."/>
            <person name="Takeuchi K."/>
            <person name="Arita M."/>
            <person name="Imose N."/>
            <person name="Musashino K."/>
            <person name="Yuuki H."/>
            <person name="Oshima A."/>
            <person name="Sasaki N."/>
            <person name="Aotsuka S."/>
            <person name="Yoshikawa Y."/>
            <person name="Matsunawa H."/>
            <person name="Ichihara T."/>
            <person name="Shiohata N."/>
            <person name="Sano S."/>
            <person name="Moriya S."/>
            <person name="Momiyama H."/>
            <person name="Satoh N."/>
            <person name="Takami S."/>
            <person name="Terashima Y."/>
            <person name="Suzuki O."/>
            <person name="Nakagawa S."/>
            <person name="Senoh A."/>
            <person name="Mizoguchi H."/>
            <person name="Goto Y."/>
            <person name="Shimizu F."/>
            <person name="Wakebe H."/>
            <person name="Hishigaki H."/>
            <person name="Watanabe T."/>
            <person name="Sugiyama A."/>
            <person name="Takemoto M."/>
            <person name="Kawakami B."/>
            <person name="Yamazaki M."/>
            <person name="Watanabe K."/>
            <person name="Kumagai A."/>
            <person name="Itakura S."/>
            <person name="Fukuzumi Y."/>
            <person name="Fujimori Y."/>
            <person name="Komiyama M."/>
            <person name="Tashiro H."/>
            <person name="Tanigami A."/>
            <person name="Fujiwara T."/>
            <person name="Ono T."/>
            <person name="Yamada K."/>
            <person name="Fujii Y."/>
            <person name="Ozaki K."/>
            <person name="Hirao M."/>
            <person name="Ohmori Y."/>
            <person name="Kawabata A."/>
            <person name="Hikiji T."/>
            <person name="Kobatake N."/>
            <person name="Inagaki H."/>
            <person name="Ikema Y."/>
            <person name="Okamoto S."/>
            <person name="Okitani R."/>
            <person name="Kawakami T."/>
            <person name="Noguchi S."/>
            <person name="Itoh T."/>
            <person name="Shigeta K."/>
            <person name="Senba T."/>
            <person name="Matsumura K."/>
            <person name="Nakajima Y."/>
            <person name="Mizuno T."/>
            <person name="Morinaga M."/>
            <person name="Sasaki M."/>
            <person name="Togashi T."/>
            <person name="Oyama M."/>
            <person name="Hata H."/>
            <person name="Watanabe M."/>
            <person name="Komatsu T."/>
            <person name="Mizushima-Sugano J."/>
            <person name="Satoh T."/>
            <person name="Shirai Y."/>
            <person name="Takahashi Y."/>
            <person name="Nakagawa K."/>
            <person name="Okumura K."/>
            <person name="Nagase T."/>
            <person name="Nomura N."/>
            <person name="Kikuchi H."/>
            <person name="Masuho Y."/>
            <person name="Yamashita R."/>
            <person name="Nakai K."/>
            <person name="Yada T."/>
            <person name="Nakamura Y."/>
            <person name="Ohara O."/>
            <person name="Isogai T."/>
            <person name="Sugano S."/>
        </authorList>
    </citation>
    <scope>NUCLEOTIDE SEQUENCE [LARGE SCALE MRNA] (ISOFORMS 2 AND 3)</scope>
    <scope>VARIANT GLU-210</scope>
    <source>
        <tissue>Testis</tissue>
    </source>
</reference>
<reference key="5">
    <citation type="journal article" date="2003" name="Science">
        <title>Human chromosome 7: DNA sequence and biology.</title>
        <authorList>
            <person name="Scherer S.W."/>
            <person name="Cheung J."/>
            <person name="MacDonald J.R."/>
            <person name="Osborne L.R."/>
            <person name="Nakabayashi K."/>
            <person name="Herbrick J.-A."/>
            <person name="Carson A.R."/>
            <person name="Parker-Katiraee L."/>
            <person name="Skaug J."/>
            <person name="Khaja R."/>
            <person name="Zhang J."/>
            <person name="Hudek A.K."/>
            <person name="Li M."/>
            <person name="Haddad M."/>
            <person name="Duggan G.E."/>
            <person name="Fernandez B.A."/>
            <person name="Kanematsu E."/>
            <person name="Gentles S."/>
            <person name="Christopoulos C.C."/>
            <person name="Choufani S."/>
            <person name="Kwasnicka D."/>
            <person name="Zheng X.H."/>
            <person name="Lai Z."/>
            <person name="Nusskern D.R."/>
            <person name="Zhang Q."/>
            <person name="Gu Z."/>
            <person name="Lu F."/>
            <person name="Zeesman S."/>
            <person name="Nowaczyk M.J."/>
            <person name="Teshima I."/>
            <person name="Chitayat D."/>
            <person name="Shuman C."/>
            <person name="Weksberg R."/>
            <person name="Zackai E.H."/>
            <person name="Grebe T.A."/>
            <person name="Cox S.R."/>
            <person name="Kirkpatrick S.J."/>
            <person name="Rahman N."/>
            <person name="Friedman J.M."/>
            <person name="Heng H.H.Q."/>
            <person name="Pelicci P.G."/>
            <person name="Lo-Coco F."/>
            <person name="Belloni E."/>
            <person name="Shaffer L.G."/>
            <person name="Pober B."/>
            <person name="Morton C.C."/>
            <person name="Gusella J.F."/>
            <person name="Bruns G.A.P."/>
            <person name="Korf B.R."/>
            <person name="Quade B.J."/>
            <person name="Ligon A.H."/>
            <person name="Ferguson H."/>
            <person name="Higgins A.W."/>
            <person name="Leach N.T."/>
            <person name="Herrick S.R."/>
            <person name="Lemyre E."/>
            <person name="Farra C.G."/>
            <person name="Kim H.-G."/>
            <person name="Summers A.M."/>
            <person name="Gripp K.W."/>
            <person name="Roberts W."/>
            <person name="Szatmari P."/>
            <person name="Winsor E.J.T."/>
            <person name="Grzeschik K.-H."/>
            <person name="Teebi A."/>
            <person name="Minassian B.A."/>
            <person name="Kere J."/>
            <person name="Armengol L."/>
            <person name="Pujana M.A."/>
            <person name="Estivill X."/>
            <person name="Wilson M.D."/>
            <person name="Koop B.F."/>
            <person name="Tosi S."/>
            <person name="Moore G.E."/>
            <person name="Boright A.P."/>
            <person name="Zlotorynski E."/>
            <person name="Kerem B."/>
            <person name="Kroisel P.M."/>
            <person name="Petek E."/>
            <person name="Oscier D.G."/>
            <person name="Mould S.J."/>
            <person name="Doehner H."/>
            <person name="Doehner K."/>
            <person name="Rommens J.M."/>
            <person name="Vincent J.B."/>
            <person name="Venter J.C."/>
            <person name="Li P.W."/>
            <person name="Mural R.J."/>
            <person name="Adams M.D."/>
            <person name="Tsui L.-C."/>
        </authorList>
    </citation>
    <scope>NUCLEOTIDE SEQUENCE [LARGE SCALE GENOMIC DNA]</scope>
    <scope>VARIANT GLU-210</scope>
</reference>
<reference key="6">
    <citation type="submission" date="2005-09" db="EMBL/GenBank/DDBJ databases">
        <authorList>
            <person name="Mural R.J."/>
            <person name="Istrail S."/>
            <person name="Sutton G.G."/>
            <person name="Florea L."/>
            <person name="Halpern A.L."/>
            <person name="Mobarry C.M."/>
            <person name="Lippert R."/>
            <person name="Walenz B."/>
            <person name="Shatkay H."/>
            <person name="Dew I."/>
            <person name="Miller J.R."/>
            <person name="Flanigan M.J."/>
            <person name="Edwards N.J."/>
            <person name="Bolanos R."/>
            <person name="Fasulo D."/>
            <person name="Halldorsson B.V."/>
            <person name="Hannenhalli S."/>
            <person name="Turner R."/>
            <person name="Yooseph S."/>
            <person name="Lu F."/>
            <person name="Nusskern D.R."/>
            <person name="Shue B.C."/>
            <person name="Zheng X.H."/>
            <person name="Zhong F."/>
            <person name="Delcher A.L."/>
            <person name="Huson D.H."/>
            <person name="Kravitz S.A."/>
            <person name="Mouchard L."/>
            <person name="Reinert K."/>
            <person name="Remington K.A."/>
            <person name="Clark A.G."/>
            <person name="Waterman M.S."/>
            <person name="Eichler E.E."/>
            <person name="Adams M.D."/>
            <person name="Hunkapiller M.W."/>
            <person name="Myers E.W."/>
            <person name="Venter J.C."/>
        </authorList>
    </citation>
    <scope>NUCLEOTIDE SEQUENCE [LARGE SCALE GENOMIC DNA]</scope>
    <scope>VARIANT GLU-210</scope>
</reference>
<reference key="7">
    <citation type="journal article" date="2003" name="Nature">
        <title>The DNA sequence of human chromosome 7.</title>
        <authorList>
            <person name="Hillier L.W."/>
            <person name="Fulton R.S."/>
            <person name="Fulton L.A."/>
            <person name="Graves T.A."/>
            <person name="Pepin K.H."/>
            <person name="Wagner-McPherson C."/>
            <person name="Layman D."/>
            <person name="Maas J."/>
            <person name="Jaeger S."/>
            <person name="Walker R."/>
            <person name="Wylie K."/>
            <person name="Sekhon M."/>
            <person name="Becker M.C."/>
            <person name="O'Laughlin M.D."/>
            <person name="Schaller M.E."/>
            <person name="Fewell G.A."/>
            <person name="Delehaunty K.D."/>
            <person name="Miner T.L."/>
            <person name="Nash W.E."/>
            <person name="Cordes M."/>
            <person name="Du H."/>
            <person name="Sun H."/>
            <person name="Edwards J."/>
            <person name="Bradshaw-Cordum H."/>
            <person name="Ali J."/>
            <person name="Andrews S."/>
            <person name="Isak A."/>
            <person name="Vanbrunt A."/>
            <person name="Nguyen C."/>
            <person name="Du F."/>
            <person name="Lamar B."/>
            <person name="Courtney L."/>
            <person name="Kalicki J."/>
            <person name="Ozersky P."/>
            <person name="Bielicki L."/>
            <person name="Scott K."/>
            <person name="Holmes A."/>
            <person name="Harkins R."/>
            <person name="Harris A."/>
            <person name="Strong C.M."/>
            <person name="Hou S."/>
            <person name="Tomlinson C."/>
            <person name="Dauphin-Kohlberg S."/>
            <person name="Kozlowicz-Reilly A."/>
            <person name="Leonard S."/>
            <person name="Rohlfing T."/>
            <person name="Rock S.M."/>
            <person name="Tin-Wollam A.-M."/>
            <person name="Abbott A."/>
            <person name="Minx P."/>
            <person name="Maupin R."/>
            <person name="Strowmatt C."/>
            <person name="Latreille P."/>
            <person name="Miller N."/>
            <person name="Johnson D."/>
            <person name="Murray J."/>
            <person name="Woessner J.P."/>
            <person name="Wendl M.C."/>
            <person name="Yang S.-P."/>
            <person name="Schultz B.R."/>
            <person name="Wallis J.W."/>
            <person name="Spieth J."/>
            <person name="Bieri T.A."/>
            <person name="Nelson J.O."/>
            <person name="Berkowicz N."/>
            <person name="Wohldmann P.E."/>
            <person name="Cook L.L."/>
            <person name="Hickenbotham M.T."/>
            <person name="Eldred J."/>
            <person name="Williams D."/>
            <person name="Bedell J.A."/>
            <person name="Mardis E.R."/>
            <person name="Clifton S.W."/>
            <person name="Chissoe S.L."/>
            <person name="Marra M.A."/>
            <person name="Raymond C."/>
            <person name="Haugen E."/>
            <person name="Gillett W."/>
            <person name="Zhou Y."/>
            <person name="James R."/>
            <person name="Phelps K."/>
            <person name="Iadanoto S."/>
            <person name="Bubb K."/>
            <person name="Simms E."/>
            <person name="Levy R."/>
            <person name="Clendenning J."/>
            <person name="Kaul R."/>
            <person name="Kent W.J."/>
            <person name="Furey T.S."/>
            <person name="Baertsch R.A."/>
            <person name="Brent M.R."/>
            <person name="Keibler E."/>
            <person name="Flicek P."/>
            <person name="Bork P."/>
            <person name="Suyama M."/>
            <person name="Bailey J.A."/>
            <person name="Portnoy M.E."/>
            <person name="Torrents D."/>
            <person name="Chinwalla A.T."/>
            <person name="Gish W.R."/>
            <person name="Eddy S.R."/>
            <person name="McPherson J.D."/>
            <person name="Olson M.V."/>
            <person name="Eichler E.E."/>
            <person name="Green E.D."/>
            <person name="Waterston R.H."/>
            <person name="Wilson R.K."/>
        </authorList>
    </citation>
    <scope>NUCLEOTIDE SEQUENCE [LARGE SCALE GENOMIC DNA]</scope>
    <scope>VARIANT GLU-210</scope>
</reference>
<reference key="8">
    <citation type="journal article" date="2004" name="Genome Res.">
        <title>The status, quality, and expansion of the NIH full-length cDNA project: the Mammalian Gene Collection (MGC).</title>
        <authorList>
            <consortium name="The MGC Project Team"/>
        </authorList>
    </citation>
    <scope>NUCLEOTIDE SEQUENCE [LARGE SCALE MRNA] (ISOFORM 1)</scope>
    <scope>VARIANT GLU-210</scope>
    <source>
        <tissue>Muscle</tissue>
    </source>
</reference>
<reference key="9">
    <citation type="journal article" date="1987" name="Proc. Natl. Acad. Sci. U.S.A.">
        <title>Molecular cloning of a gene that is necessary for G1 progression in mammalian cells.</title>
        <authorList>
            <person name="Greco A."/>
            <person name="Ittmann M."/>
            <person name="Basilico C."/>
        </authorList>
    </citation>
    <scope>NUCLEOTIDE SEQUENCE [MRNA] OF 23-561 (ISOFORM 1)</scope>
</reference>
<reference key="10">
    <citation type="journal article" date="1989" name="Mol. Cell. Biol.">
        <title>Organization and expression of the cell cycle gene, ts11, that encodes asparagine synthetase.</title>
        <authorList>
            <person name="Greco A."/>
            <person name="Gong S.S."/>
            <person name="Ittmann M."/>
            <person name="Basilico C."/>
        </authorList>
    </citation>
    <scope>NUCLEOTIDE SEQUENCE [GENOMIC DNA] OF 1-83</scope>
</reference>
<reference key="11">
    <citation type="journal article" date="1989" name="J. Biol. Chem.">
        <title>Expression of human asparagine synthetase in Escherichia coli.</title>
        <authorList>
            <person name="van Heeke G."/>
            <person name="Schuster S.M."/>
        </authorList>
    </citation>
    <scope>ACTIVE SITE</scope>
</reference>
<reference key="12">
    <citation type="journal article" date="1989" name="J. Biol. Chem.">
        <title>The N-terminal cysteine of human asparagine synthetase is essential for glutamine-dependent activity.</title>
        <authorList>
            <person name="van Heeke G."/>
            <person name="Schuster S.M."/>
        </authorList>
    </citation>
    <scope>MUTAGENESIS OF CYS-2</scope>
    <scope>CATALYTIC ACTIVITY</scope>
    <scope>ACTIVE SITE</scope>
</reference>
<reference key="13">
    <citation type="journal article" date="2003" name="Nature">
        <title>Proteomic characterization of the human centrosome by protein correlation profiling.</title>
        <authorList>
            <person name="Andersen J.S."/>
            <person name="Wilkinson C.J."/>
            <person name="Mayor T."/>
            <person name="Mortensen P."/>
            <person name="Nigg E.A."/>
            <person name="Mann M."/>
        </authorList>
    </citation>
    <scope>IDENTIFICATION BY MASS SPECTROMETRY</scope>
    <source>
        <tissue>Lymphoblast</tissue>
    </source>
</reference>
<reference key="14">
    <citation type="journal article" date="2009" name="Science">
        <title>Lysine acetylation targets protein complexes and co-regulates major cellular functions.</title>
        <authorList>
            <person name="Choudhary C."/>
            <person name="Kumar C."/>
            <person name="Gnad F."/>
            <person name="Nielsen M.L."/>
            <person name="Rehman M."/>
            <person name="Walther T.C."/>
            <person name="Olsen J.V."/>
            <person name="Mann M."/>
        </authorList>
    </citation>
    <scope>ACETYLATION [LARGE SCALE ANALYSIS] AT LYS-385</scope>
    <scope>IDENTIFICATION BY MASS SPECTROMETRY [LARGE SCALE ANALYSIS]</scope>
</reference>
<reference key="15">
    <citation type="journal article" date="2011" name="BMC Syst. Biol.">
        <title>Initial characterization of the human central proteome.</title>
        <authorList>
            <person name="Burkard T.R."/>
            <person name="Planyavsky M."/>
            <person name="Kaupe I."/>
            <person name="Breitwieser F.P."/>
            <person name="Buerckstuemmer T."/>
            <person name="Bennett K.L."/>
            <person name="Superti-Furga G."/>
            <person name="Colinge J."/>
        </authorList>
    </citation>
    <scope>IDENTIFICATION BY MASS SPECTROMETRY [LARGE SCALE ANALYSIS]</scope>
</reference>
<reference key="16">
    <citation type="journal article" date="2013" name="J. Proteome Res.">
        <title>Toward a comprehensive characterization of a human cancer cell phosphoproteome.</title>
        <authorList>
            <person name="Zhou H."/>
            <person name="Di Palma S."/>
            <person name="Preisinger C."/>
            <person name="Peng M."/>
            <person name="Polat A.N."/>
            <person name="Heck A.J."/>
            <person name="Mohammed S."/>
        </authorList>
    </citation>
    <scope>PHOSPHORYLATION [LARGE SCALE ANALYSIS] AT THR-545 AND SER-557</scope>
    <scope>IDENTIFICATION BY MASS SPECTROMETRY [LARGE SCALE ANALYSIS]</scope>
    <source>
        <tissue>Erythroleukemia</tissue>
    </source>
</reference>
<reference key="17">
    <citation type="journal article" date="2013" name="Neuron">
        <title>Deficiency of asparagine synthetase causes congenital microcephaly and a progressive form of encephalopathy.</title>
        <authorList>
            <person name="Ruzzo E.K."/>
            <person name="Capo-Chichi J.M."/>
            <person name="Ben-Zeev B."/>
            <person name="Chitayat D."/>
            <person name="Mao H."/>
            <person name="Pappas A.L."/>
            <person name="Hitomi Y."/>
            <person name="Lu Y.F."/>
            <person name="Yao X."/>
            <person name="Hamdan F.F."/>
            <person name="Pelak K."/>
            <person name="Reznik-Wolf H."/>
            <person name="Bar-Joseph I."/>
            <person name="Oz-Levi D."/>
            <person name="Lev D."/>
            <person name="Lerman-Sagie T."/>
            <person name="Leshinsky-Silver E."/>
            <person name="Anikster Y."/>
            <person name="Ben-Asher E."/>
            <person name="Olender T."/>
            <person name="Colleaux L."/>
            <person name="Decarie J.C."/>
            <person name="Blaser S."/>
            <person name="Banwell B."/>
            <person name="Joshi R.B."/>
            <person name="He X.P."/>
            <person name="Patry L."/>
            <person name="Silver R.J."/>
            <person name="Dobrzeniecka S."/>
            <person name="Islam M.S."/>
            <person name="Hasnat A."/>
            <person name="Samuels M.E."/>
            <person name="Aryal D.K."/>
            <person name="Rodriguiz R.M."/>
            <person name="Jiang Y.H."/>
            <person name="Wetsel W.C."/>
            <person name="McNamara J.O."/>
            <person name="Rouleau G.A."/>
            <person name="Silver D.L."/>
            <person name="Lancet D."/>
            <person name="Pras E."/>
            <person name="Mitchell G.A."/>
            <person name="Michaud J.L."/>
            <person name="Goldstein D.B."/>
        </authorList>
    </citation>
    <scope>VARIANTS ASNSD GLU-6; VAL-362 AND CYS-550</scope>
    <scope>CHARACTERIZATION OF VARIANTS ASNSD GLU-6; VAL-362 AND CYS-550</scope>
</reference>
<name>ASNS_HUMAN</name>
<dbReference type="EC" id="6.3.5.4"/>
<dbReference type="EMBL" id="M27396">
    <property type="protein sequence ID" value="AAA51789.1"/>
    <property type="molecule type" value="mRNA"/>
</dbReference>
<dbReference type="EMBL" id="L35946">
    <property type="protein sequence ID" value="AAA52756.1"/>
    <property type="molecule type" value="Genomic_DNA"/>
</dbReference>
<dbReference type="EMBL" id="L35936">
    <property type="protein sequence ID" value="AAA52756.1"/>
    <property type="status" value="JOINED"/>
    <property type="molecule type" value="Genomic_DNA"/>
</dbReference>
<dbReference type="EMBL" id="L35937">
    <property type="protein sequence ID" value="AAA52756.1"/>
    <property type="status" value="JOINED"/>
    <property type="molecule type" value="Genomic_DNA"/>
</dbReference>
<dbReference type="EMBL" id="L35938">
    <property type="protein sequence ID" value="AAA52756.1"/>
    <property type="status" value="JOINED"/>
    <property type="molecule type" value="Genomic_DNA"/>
</dbReference>
<dbReference type="EMBL" id="L35939">
    <property type="protein sequence ID" value="AAA52756.1"/>
    <property type="status" value="JOINED"/>
    <property type="molecule type" value="Genomic_DNA"/>
</dbReference>
<dbReference type="EMBL" id="L35940">
    <property type="protein sequence ID" value="AAA52756.1"/>
    <property type="status" value="JOINED"/>
    <property type="molecule type" value="Genomic_DNA"/>
</dbReference>
<dbReference type="EMBL" id="L35941">
    <property type="protein sequence ID" value="AAA52756.1"/>
    <property type="status" value="JOINED"/>
    <property type="molecule type" value="Genomic_DNA"/>
</dbReference>
<dbReference type="EMBL" id="L35942">
    <property type="protein sequence ID" value="AAA52756.1"/>
    <property type="status" value="JOINED"/>
    <property type="molecule type" value="Genomic_DNA"/>
</dbReference>
<dbReference type="EMBL" id="L35943">
    <property type="protein sequence ID" value="AAA52756.1"/>
    <property type="status" value="JOINED"/>
    <property type="molecule type" value="Genomic_DNA"/>
</dbReference>
<dbReference type="EMBL" id="L35944">
    <property type="protein sequence ID" value="AAA52756.1"/>
    <property type="status" value="JOINED"/>
    <property type="molecule type" value="Genomic_DNA"/>
</dbReference>
<dbReference type="EMBL" id="L35945">
    <property type="protein sequence ID" value="AAA52756.1"/>
    <property type="status" value="JOINED"/>
    <property type="molecule type" value="Genomic_DNA"/>
</dbReference>
<dbReference type="EMBL" id="BT007113">
    <property type="protein sequence ID" value="AAP35777.1"/>
    <property type="molecule type" value="mRNA"/>
</dbReference>
<dbReference type="EMBL" id="AK302189">
    <property type="protein sequence ID" value="BAG63553.1"/>
    <property type="molecule type" value="mRNA"/>
</dbReference>
<dbReference type="EMBL" id="AK316224">
    <property type="protein sequence ID" value="BAH14595.1"/>
    <property type="molecule type" value="mRNA"/>
</dbReference>
<dbReference type="EMBL" id="AC005326">
    <property type="status" value="NOT_ANNOTATED_CDS"/>
    <property type="molecule type" value="Genomic_DNA"/>
</dbReference>
<dbReference type="EMBL" id="AC079781">
    <property type="protein sequence ID" value="AAQ96856.1"/>
    <property type="molecule type" value="Genomic_DNA"/>
</dbReference>
<dbReference type="EMBL" id="CH236949">
    <property type="protein sequence ID" value="EAL24115.1"/>
    <property type="molecule type" value="Genomic_DNA"/>
</dbReference>
<dbReference type="EMBL" id="CH471091">
    <property type="protein sequence ID" value="EAW76730.1"/>
    <property type="molecule type" value="Genomic_DNA"/>
</dbReference>
<dbReference type="EMBL" id="CH471091">
    <property type="protein sequence ID" value="EAW76723.1"/>
    <property type="molecule type" value="Genomic_DNA"/>
</dbReference>
<dbReference type="EMBL" id="CH471091">
    <property type="protein sequence ID" value="EAW76731.1"/>
    <property type="molecule type" value="Genomic_DNA"/>
</dbReference>
<dbReference type="EMBL" id="CH471091">
    <property type="protein sequence ID" value="EAW76732.1"/>
    <property type="molecule type" value="Genomic_DNA"/>
</dbReference>
<dbReference type="EMBL" id="CH471091">
    <property type="protein sequence ID" value="EAW76733.1"/>
    <property type="molecule type" value="Genomic_DNA"/>
</dbReference>
<dbReference type="EMBL" id="BC008723">
    <property type="protein sequence ID" value="AAH08723.1"/>
    <property type="molecule type" value="mRNA"/>
</dbReference>
<dbReference type="EMBL" id="BC014621">
    <property type="protein sequence ID" value="AAH14621.1"/>
    <property type="molecule type" value="mRNA"/>
</dbReference>
<dbReference type="EMBL" id="M15798">
    <property type="protein sequence ID" value="AAA36781.1"/>
    <property type="molecule type" value="mRNA"/>
</dbReference>
<dbReference type="EMBL" id="M27054">
    <property type="protein sequence ID" value="AAA63266.1"/>
    <property type="molecule type" value="Genomic_DNA"/>
</dbReference>
<dbReference type="CCDS" id="CCDS55131.1">
    <molecule id="P08243-3"/>
</dbReference>
<dbReference type="CCDS" id="CCDS55132.1">
    <molecule id="P08243-2"/>
</dbReference>
<dbReference type="CCDS" id="CCDS5652.1">
    <molecule id="P08243-1"/>
</dbReference>
<dbReference type="PIR" id="A27062">
    <property type="entry name" value="AJHUN1"/>
</dbReference>
<dbReference type="RefSeq" id="NP_001171546.1">
    <molecule id="P08243-2"/>
    <property type="nucleotide sequence ID" value="NM_001178075.2"/>
</dbReference>
<dbReference type="RefSeq" id="NP_001171547.1">
    <molecule id="P08243-3"/>
    <property type="nucleotide sequence ID" value="NM_001178076.2"/>
</dbReference>
<dbReference type="RefSeq" id="NP_001171548.1">
    <molecule id="P08243-3"/>
    <property type="nucleotide sequence ID" value="NM_001178077.1"/>
</dbReference>
<dbReference type="RefSeq" id="NP_001339425.1">
    <molecule id="P08243-1"/>
    <property type="nucleotide sequence ID" value="NM_001352496.2"/>
</dbReference>
<dbReference type="RefSeq" id="NP_001664.3">
    <molecule id="P08243-1"/>
    <property type="nucleotide sequence ID" value="NM_001673.4"/>
</dbReference>
<dbReference type="RefSeq" id="NP_597680.2">
    <molecule id="P08243-1"/>
    <property type="nucleotide sequence ID" value="NM_133436.3"/>
</dbReference>
<dbReference type="RefSeq" id="NP_899199.2">
    <molecule id="P08243-1"/>
    <property type="nucleotide sequence ID" value="NM_183356.4"/>
</dbReference>
<dbReference type="PDB" id="6GQ3">
    <property type="method" value="X-ray"/>
    <property type="resolution" value="1.85 A"/>
    <property type="chains" value="A/B=1-561"/>
</dbReference>
<dbReference type="PDB" id="8SUE">
    <property type="method" value="EM"/>
    <property type="resolution" value="3.50 A"/>
    <property type="chains" value="A/B=2-561"/>
</dbReference>
<dbReference type="PDB" id="9B6C">
    <property type="method" value="EM"/>
    <property type="resolution" value="3.35 A"/>
    <property type="chains" value="A/B=2-561"/>
</dbReference>
<dbReference type="PDBsum" id="6GQ3"/>
<dbReference type="PDBsum" id="8SUE"/>
<dbReference type="PDBsum" id="9B6C"/>
<dbReference type="EMDB" id="EMD-40764"/>
<dbReference type="EMDB" id="EMD-44253"/>
<dbReference type="SMR" id="P08243"/>
<dbReference type="BioGRID" id="106932">
    <property type="interactions" value="189"/>
</dbReference>
<dbReference type="FunCoup" id="P08243">
    <property type="interactions" value="878"/>
</dbReference>
<dbReference type="IntAct" id="P08243">
    <property type="interactions" value="49"/>
</dbReference>
<dbReference type="MINT" id="P08243"/>
<dbReference type="STRING" id="9606.ENSP00000377845"/>
<dbReference type="BindingDB" id="P08243"/>
<dbReference type="ChEMBL" id="CHEMBL3120"/>
<dbReference type="DrugBank" id="DB00174">
    <property type="generic name" value="Asparagine"/>
</dbReference>
<dbReference type="DrugBank" id="DB00128">
    <property type="generic name" value="Aspartic acid"/>
</dbReference>
<dbReference type="DrugBank" id="DB00171">
    <property type="generic name" value="ATP"/>
</dbReference>
<dbReference type="DrugBank" id="DB00142">
    <property type="generic name" value="Glutamic acid"/>
</dbReference>
<dbReference type="DrugBank" id="DB00130">
    <property type="generic name" value="L-Glutamine"/>
</dbReference>
<dbReference type="DrugCentral" id="P08243"/>
<dbReference type="MEROPS" id="C44.974"/>
<dbReference type="GlyGen" id="P08243">
    <property type="glycosylation" value="1 site, 1 O-linked glycan (1 site)"/>
</dbReference>
<dbReference type="iPTMnet" id="P08243"/>
<dbReference type="MetOSite" id="P08243"/>
<dbReference type="PhosphoSitePlus" id="P08243"/>
<dbReference type="SwissPalm" id="P08243"/>
<dbReference type="BioMuta" id="ASNS"/>
<dbReference type="DMDM" id="13432102"/>
<dbReference type="jPOST" id="P08243"/>
<dbReference type="MassIVE" id="P08243"/>
<dbReference type="PaxDb" id="9606-ENSP00000175506"/>
<dbReference type="PeptideAtlas" id="P08243"/>
<dbReference type="ProteomicsDB" id="19452"/>
<dbReference type="ProteomicsDB" id="19538"/>
<dbReference type="ProteomicsDB" id="52098">
    <molecule id="P08243-1"/>
</dbReference>
<dbReference type="Pumba" id="P08243"/>
<dbReference type="Antibodypedia" id="30203">
    <property type="antibodies" value="397 antibodies from 35 providers"/>
</dbReference>
<dbReference type="DNASU" id="440"/>
<dbReference type="Ensembl" id="ENST00000175506.8">
    <molecule id="P08243-1"/>
    <property type="protein sequence ID" value="ENSP00000175506.4"/>
    <property type="gene ID" value="ENSG00000070669.17"/>
</dbReference>
<dbReference type="Ensembl" id="ENST00000394308.8">
    <molecule id="P08243-1"/>
    <property type="protein sequence ID" value="ENSP00000377845.3"/>
    <property type="gene ID" value="ENSG00000070669.17"/>
</dbReference>
<dbReference type="Ensembl" id="ENST00000394309.7">
    <molecule id="P08243-1"/>
    <property type="protein sequence ID" value="ENSP00000377846.3"/>
    <property type="gene ID" value="ENSG00000070669.17"/>
</dbReference>
<dbReference type="Ensembl" id="ENST00000422745.5">
    <molecule id="P08243-2"/>
    <property type="protein sequence ID" value="ENSP00000414901.1"/>
    <property type="gene ID" value="ENSG00000070669.17"/>
</dbReference>
<dbReference type="Ensembl" id="ENST00000437628.5">
    <molecule id="P08243-3"/>
    <property type="protein sequence ID" value="ENSP00000414379.1"/>
    <property type="gene ID" value="ENSG00000070669.17"/>
</dbReference>
<dbReference type="Ensembl" id="ENST00000444334.5">
    <molecule id="P08243-2"/>
    <property type="protein sequence ID" value="ENSP00000406994.1"/>
    <property type="gene ID" value="ENSG00000070669.17"/>
</dbReference>
<dbReference type="Ensembl" id="ENST00000455086.5">
    <molecule id="P08243-3"/>
    <property type="protein sequence ID" value="ENSP00000408472.1"/>
    <property type="gene ID" value="ENSG00000070669.17"/>
</dbReference>
<dbReference type="GeneID" id="440"/>
<dbReference type="KEGG" id="hsa:440"/>
<dbReference type="MANE-Select" id="ENST00000394308.8">
    <property type="protein sequence ID" value="ENSP00000377845.3"/>
    <property type="RefSeq nucleotide sequence ID" value="NM_001673.5"/>
    <property type="RefSeq protein sequence ID" value="NP_001664.3"/>
</dbReference>
<dbReference type="UCSC" id="uc003uot.5">
    <molecule id="P08243-1"/>
    <property type="organism name" value="human"/>
</dbReference>
<dbReference type="AGR" id="HGNC:753"/>
<dbReference type="CTD" id="440"/>
<dbReference type="DisGeNET" id="440"/>
<dbReference type="GeneCards" id="ASNS"/>
<dbReference type="GeneReviews" id="ASNS"/>
<dbReference type="HGNC" id="HGNC:753">
    <property type="gene designation" value="ASNS"/>
</dbReference>
<dbReference type="HPA" id="ENSG00000070669">
    <property type="expression patterns" value="Tissue enhanced (pancreas)"/>
</dbReference>
<dbReference type="MalaCards" id="ASNS"/>
<dbReference type="MIM" id="108370">
    <property type="type" value="gene"/>
</dbReference>
<dbReference type="MIM" id="615574">
    <property type="type" value="phenotype"/>
</dbReference>
<dbReference type="neXtProt" id="NX_P08243"/>
<dbReference type="OpenTargets" id="ENSG00000070669"/>
<dbReference type="Orphanet" id="391376">
    <property type="disease" value="Congenital microcephaly-severe encephalopathy-progressive cerebral atrophy syndrome"/>
</dbReference>
<dbReference type="PharmGKB" id="PA25052"/>
<dbReference type="VEuPathDB" id="HostDB:ENSG00000070669"/>
<dbReference type="eggNOG" id="KOG0571">
    <property type="taxonomic scope" value="Eukaryota"/>
</dbReference>
<dbReference type="GeneTree" id="ENSGT00390000001994"/>
<dbReference type="HOGENOM" id="CLU_014658_2_1_1"/>
<dbReference type="InParanoid" id="P08243"/>
<dbReference type="OMA" id="HYLNFHA"/>
<dbReference type="OrthoDB" id="409189at2759"/>
<dbReference type="PAN-GO" id="P08243">
    <property type="GO annotations" value="3 GO annotations based on evolutionary models"/>
</dbReference>
<dbReference type="PhylomeDB" id="P08243"/>
<dbReference type="TreeFam" id="TF300603"/>
<dbReference type="BRENDA" id="6.3.5.4">
    <property type="organism ID" value="2681"/>
</dbReference>
<dbReference type="PathwayCommons" id="P08243"/>
<dbReference type="Reactome" id="R-HSA-380994">
    <property type="pathway name" value="ATF4 activates genes in response to endoplasmic reticulum stress"/>
</dbReference>
<dbReference type="Reactome" id="R-HSA-8963693">
    <property type="pathway name" value="Aspartate and asparagine metabolism"/>
</dbReference>
<dbReference type="Reactome" id="R-HSA-9633012">
    <property type="pathway name" value="Response of EIF2AK4 (GCN2) to amino acid deficiency"/>
</dbReference>
<dbReference type="Reactome" id="R-HSA-9648895">
    <property type="pathway name" value="Response of EIF2AK1 (HRI) to heme deficiency"/>
</dbReference>
<dbReference type="SignaLink" id="P08243"/>
<dbReference type="SIGNOR" id="P08243"/>
<dbReference type="UniPathway" id="UPA00134">
    <property type="reaction ID" value="UER00195"/>
</dbReference>
<dbReference type="BioGRID-ORCS" id="440">
    <property type="hits" value="106 hits in 1152 CRISPR screens"/>
</dbReference>
<dbReference type="ChiTaRS" id="ASNS">
    <property type="organism name" value="human"/>
</dbReference>
<dbReference type="GenomeRNAi" id="440"/>
<dbReference type="Pharos" id="P08243">
    <property type="development level" value="Tchem"/>
</dbReference>
<dbReference type="PRO" id="PR:P08243"/>
<dbReference type="Proteomes" id="UP000005640">
    <property type="component" value="Chromosome 7"/>
</dbReference>
<dbReference type="RNAct" id="P08243">
    <property type="molecule type" value="protein"/>
</dbReference>
<dbReference type="Bgee" id="ENSG00000070669">
    <property type="expression patterns" value="Expressed in cerebellar hemisphere and 96 other cell types or tissues"/>
</dbReference>
<dbReference type="ExpressionAtlas" id="P08243">
    <property type="expression patterns" value="baseline and differential"/>
</dbReference>
<dbReference type="GO" id="GO:0005829">
    <property type="term" value="C:cytosol"/>
    <property type="evidence" value="ECO:0000314"/>
    <property type="project" value="HPA"/>
</dbReference>
<dbReference type="GO" id="GO:0004066">
    <property type="term" value="F:asparagine synthase (glutamine-hydrolyzing) activity"/>
    <property type="evidence" value="ECO:0000314"/>
    <property type="project" value="UniProtKB"/>
</dbReference>
<dbReference type="GO" id="GO:0005524">
    <property type="term" value="F:ATP binding"/>
    <property type="evidence" value="ECO:0007669"/>
    <property type="project" value="UniProtKB-KW"/>
</dbReference>
<dbReference type="GO" id="GO:0006529">
    <property type="term" value="P:asparagine biosynthetic process"/>
    <property type="evidence" value="ECO:0000314"/>
    <property type="project" value="MGI"/>
</dbReference>
<dbReference type="GO" id="GO:0042149">
    <property type="term" value="P:cellular response to glucose starvation"/>
    <property type="evidence" value="ECO:0000314"/>
    <property type="project" value="UniProtKB"/>
</dbReference>
<dbReference type="GO" id="GO:0070981">
    <property type="term" value="P:L-asparagine biosynthetic process"/>
    <property type="evidence" value="ECO:0007669"/>
    <property type="project" value="UniProtKB-UniPathway"/>
</dbReference>
<dbReference type="GO" id="GO:0043066">
    <property type="term" value="P:negative regulation of apoptotic process"/>
    <property type="evidence" value="ECO:0000315"/>
    <property type="project" value="UniProtKB"/>
</dbReference>
<dbReference type="GO" id="GO:0045931">
    <property type="term" value="P:positive regulation of mitotic cell cycle"/>
    <property type="evidence" value="ECO:0000314"/>
    <property type="project" value="UniProtKB"/>
</dbReference>
<dbReference type="CDD" id="cd01991">
    <property type="entry name" value="Asn_synthase_B_C"/>
    <property type="match status" value="1"/>
</dbReference>
<dbReference type="CDD" id="cd00712">
    <property type="entry name" value="AsnB"/>
    <property type="match status" value="1"/>
</dbReference>
<dbReference type="FunFam" id="3.60.20.10:FF:000039">
    <property type="entry name" value="Asparagine synthetase [glutamine-hydrolyzing]"/>
    <property type="match status" value="1"/>
</dbReference>
<dbReference type="FunFam" id="3.40.50.620:FF:000090">
    <property type="entry name" value="asparagine synthetase [glutamine-hydrolyzing]"/>
    <property type="match status" value="1"/>
</dbReference>
<dbReference type="Gene3D" id="3.60.20.10">
    <property type="entry name" value="Glutamine Phosphoribosylpyrophosphate, subunit 1, domain 1"/>
    <property type="match status" value="1"/>
</dbReference>
<dbReference type="Gene3D" id="3.40.50.620">
    <property type="entry name" value="HUPs"/>
    <property type="match status" value="1"/>
</dbReference>
<dbReference type="InterPro" id="IPR006426">
    <property type="entry name" value="Asn_synth_AEB"/>
</dbReference>
<dbReference type="InterPro" id="IPR001962">
    <property type="entry name" value="Asn_synthase"/>
</dbReference>
<dbReference type="InterPro" id="IPR050795">
    <property type="entry name" value="Asn_Synthetase"/>
</dbReference>
<dbReference type="InterPro" id="IPR033738">
    <property type="entry name" value="AsnB_N"/>
</dbReference>
<dbReference type="InterPro" id="IPR017932">
    <property type="entry name" value="GATase_2_dom"/>
</dbReference>
<dbReference type="InterPro" id="IPR029055">
    <property type="entry name" value="Ntn_hydrolases_N"/>
</dbReference>
<dbReference type="InterPro" id="IPR014729">
    <property type="entry name" value="Rossmann-like_a/b/a_fold"/>
</dbReference>
<dbReference type="NCBIfam" id="TIGR01536">
    <property type="entry name" value="asn_synth_AEB"/>
    <property type="match status" value="1"/>
</dbReference>
<dbReference type="NCBIfam" id="NF006949">
    <property type="entry name" value="PRK09431.1"/>
    <property type="match status" value="1"/>
</dbReference>
<dbReference type="PANTHER" id="PTHR11772">
    <property type="entry name" value="ASPARAGINE SYNTHETASE"/>
    <property type="match status" value="1"/>
</dbReference>
<dbReference type="PANTHER" id="PTHR11772:SF36">
    <property type="entry name" value="ASPARAGINE SYNTHETASE [GLUTAMINE-HYDROLYZING]"/>
    <property type="match status" value="1"/>
</dbReference>
<dbReference type="Pfam" id="PF00733">
    <property type="entry name" value="Asn_synthase"/>
    <property type="match status" value="2"/>
</dbReference>
<dbReference type="Pfam" id="PF13537">
    <property type="entry name" value="GATase_7"/>
    <property type="match status" value="1"/>
</dbReference>
<dbReference type="PIRSF" id="PIRSF001589">
    <property type="entry name" value="Asn_synthetase_glu-h"/>
    <property type="match status" value="1"/>
</dbReference>
<dbReference type="SUPFAM" id="SSF52402">
    <property type="entry name" value="Adenine nucleotide alpha hydrolases-like"/>
    <property type="match status" value="1"/>
</dbReference>
<dbReference type="SUPFAM" id="SSF56235">
    <property type="entry name" value="N-terminal nucleophile aminohydrolases (Ntn hydrolases)"/>
    <property type="match status" value="1"/>
</dbReference>
<dbReference type="PROSITE" id="PS51278">
    <property type="entry name" value="GATASE_TYPE_2"/>
    <property type="match status" value="1"/>
</dbReference>
<sequence>MCGIWALFGSDDCLSVQCLSAMKIAHRGPDAFRFENVNGYTNCCFGFHRLAVVDPLFGMQPIRVKKYPYLWLCYNGEIYNHKKMQQHFEFEYQTKVDGEIILHLYDKGGIEQTICMLDGVFAFVLLDTANKKVFLGRDTYGVRPLFKAMTEDGFLAVCSEAKGLVTLKHSATPFLKVEPFLPGHYEVLDLKPNGKVASVEMVKYHHCRDVPLHALYDNVEKLFPGFEIETVKNNLRILFNNAVKKRLMTDRRIGCLLSGGLDSSLVAATLLKQLKEAQVQYPLQTFAIGMEDSPDLLAARKVADHIGSEHYEVLFNSEEGIQALDEVIFSLETYDITTVRASVGMYLISKYIRKNTDSVVIFSGEGSDELTQGYIYFHKAPSPEKAEEESERLLRELYLFDVLRADRTTAAHGLELRVPFLDHRFSSYYLSLPPEMRIPKNGIEKHLLRETFEDSNLIPKEILWRPKEAFSDGITSVKNSWFKILQEYVEHQVDDAMMANAAQKFPFNTPKTKEGYYYRQVFERHYPGRADWLSHYWMPKWINATDPSARTLTHYKSAVKA</sequence>
<gene>
    <name type="primary">ASNS</name>
    <name type="synonym">TS11</name>
</gene>
<keyword id="KW-0002">3D-structure</keyword>
<keyword id="KW-0007">Acetylation</keyword>
<keyword id="KW-0025">Alternative splicing</keyword>
<keyword id="KW-0028">Amino-acid biosynthesis</keyword>
<keyword id="KW-0061">Asparagine biosynthesis</keyword>
<keyword id="KW-0067">ATP-binding</keyword>
<keyword id="KW-0225">Disease variant</keyword>
<keyword id="KW-0315">Glutamine amidotransferase</keyword>
<keyword id="KW-0991">Intellectual disability</keyword>
<keyword id="KW-0436">Ligase</keyword>
<keyword id="KW-0547">Nucleotide-binding</keyword>
<keyword id="KW-0597">Phosphoprotein</keyword>
<keyword id="KW-1267">Proteomics identification</keyword>
<keyword id="KW-1185">Reference proteome</keyword>
<proteinExistence type="evidence at protein level"/>
<evidence type="ECO:0000250" key="1"/>
<evidence type="ECO:0000255" key="2">
    <source>
        <dbReference type="PROSITE-ProRule" id="PRU00609"/>
    </source>
</evidence>
<evidence type="ECO:0000269" key="3">
    <source>
    </source>
</evidence>
<evidence type="ECO:0000269" key="4">
    <source>
    </source>
</evidence>
<evidence type="ECO:0000269" key="5">
    <source>
    </source>
</evidence>
<evidence type="ECO:0000269" key="6">
    <source>
    </source>
</evidence>
<evidence type="ECO:0000269" key="7">
    <source>
    </source>
</evidence>
<evidence type="ECO:0000269" key="8">
    <source>
    </source>
</evidence>
<evidence type="ECO:0000269" key="9">
    <source>
    </source>
</evidence>
<evidence type="ECO:0000269" key="10">
    <source ref="6"/>
</evidence>
<evidence type="ECO:0000303" key="11">
    <source>
    </source>
</evidence>
<evidence type="ECO:0000305" key="12"/>
<evidence type="ECO:0007744" key="13">
    <source>
    </source>
</evidence>
<evidence type="ECO:0007744" key="14">
    <source>
    </source>
</evidence>
<evidence type="ECO:0007829" key="15">
    <source>
        <dbReference type="PDB" id="6GQ3"/>
    </source>
</evidence>
<evidence type="ECO:0007829" key="16">
    <source>
        <dbReference type="PDB" id="8SUE"/>
    </source>
</evidence>
<organism>
    <name type="scientific">Homo sapiens</name>
    <name type="common">Human</name>
    <dbReference type="NCBI Taxonomy" id="9606"/>
    <lineage>
        <taxon>Eukaryota</taxon>
        <taxon>Metazoa</taxon>
        <taxon>Chordata</taxon>
        <taxon>Craniata</taxon>
        <taxon>Vertebrata</taxon>
        <taxon>Euteleostomi</taxon>
        <taxon>Mammalia</taxon>
        <taxon>Eutheria</taxon>
        <taxon>Euarchontoglires</taxon>
        <taxon>Primates</taxon>
        <taxon>Haplorrhini</taxon>
        <taxon>Catarrhini</taxon>
        <taxon>Hominidae</taxon>
        <taxon>Homo</taxon>
    </lineage>
</organism>
<accession>P08243</accession>
<accession>A4D1I8</accession>
<accession>B4DXZ1</accession>
<accession>B7ZAA9</accession>
<accession>D6W5R3</accession>
<accession>E9PCI3</accession>
<accession>E9PCX6</accession>
<accession>P08184</accession>
<accession>Q15666</accession>
<accession>Q549T9</accession>
<accession>Q96HD0</accession>
<comment type="catalytic activity">
    <reaction evidence="9">
        <text>L-aspartate + L-glutamine + ATP + H2O = L-asparagine + L-glutamate + AMP + diphosphate + H(+)</text>
        <dbReference type="Rhea" id="RHEA:12228"/>
        <dbReference type="ChEBI" id="CHEBI:15377"/>
        <dbReference type="ChEBI" id="CHEBI:15378"/>
        <dbReference type="ChEBI" id="CHEBI:29985"/>
        <dbReference type="ChEBI" id="CHEBI:29991"/>
        <dbReference type="ChEBI" id="CHEBI:30616"/>
        <dbReference type="ChEBI" id="CHEBI:33019"/>
        <dbReference type="ChEBI" id="CHEBI:58048"/>
        <dbReference type="ChEBI" id="CHEBI:58359"/>
        <dbReference type="ChEBI" id="CHEBI:456215"/>
        <dbReference type="EC" id="6.3.5.4"/>
    </reaction>
</comment>
<comment type="pathway">
    <text>Amino-acid biosynthesis; L-asparagine biosynthesis; L-asparagine from L-aspartate (L-Gln route): step 1/1.</text>
</comment>
<comment type="interaction">
    <interactant intactId="EBI-722989">
        <id>P08243</id>
    </interactant>
    <interactant intactId="EBI-749955">
        <id>Q86WT6</id>
        <label>TRIM69</label>
    </interactant>
    <organismsDiffer>false</organismsDiffer>
    <experiments>4</experiments>
</comment>
<comment type="interaction">
    <interactant intactId="EBI-722989">
        <id>P08243</id>
    </interactant>
    <interactant intactId="EBI-11525489">
        <id>Q86WT6-2</id>
        <label>TRIM69</label>
    </interactant>
    <organismsDiffer>false</organismsDiffer>
    <experiments>3</experiments>
</comment>
<comment type="interaction">
    <interactant intactId="EBI-722989">
        <id>P08243</id>
    </interactant>
    <interactant intactId="EBI-9476803">
        <id>A2RRH5</id>
        <label>WDR27</label>
    </interactant>
    <organismsDiffer>false</organismsDiffer>
    <experiments>3</experiments>
</comment>
<comment type="alternative products">
    <event type="alternative splicing"/>
    <isoform>
        <id>P08243-1</id>
        <name>1</name>
        <sequence type="displayed"/>
    </isoform>
    <isoform>
        <id>P08243-2</id>
        <name>2</name>
        <sequence type="described" ref="VSP_045818"/>
    </isoform>
    <isoform>
        <id>P08243-3</id>
        <name>3</name>
        <sequence type="described" ref="VSP_045817"/>
    </isoform>
</comment>
<comment type="disease" evidence="7">
    <disease id="DI-03985">
        <name>Asparagine synthetase deficiency</name>
        <acronym>ASNSD</acronym>
        <description>An inborn error of asparagine biosynthesis that results in a severe neurologic disorder characterized by microcephaly, severely delayed psychomotor development, progressive encephalopathy, cortical atrophy, and seizure or hyperekplexic activity.</description>
        <dbReference type="MIM" id="615574"/>
    </disease>
    <text>The disease is caused by variants affecting the gene represented in this entry.</text>
</comment>
<comment type="online information" name="Atlas of Genetics and Cytogenetics in Oncology and Haematology">
    <link uri="https://atlasgeneticsoncology.org/gene/44323/ASNS"/>
</comment>
<feature type="initiator methionine" description="Removed" evidence="1">
    <location>
        <position position="1"/>
    </location>
</feature>
<feature type="chain" id="PRO_0000056910" description="Asparagine synthetase [glutamine-hydrolyzing]">
    <location>
        <begin position="2"/>
        <end position="561"/>
    </location>
</feature>
<feature type="domain" description="Glutamine amidotransferase type-2" evidence="2">
    <location>
        <begin position="2"/>
        <end position="191"/>
    </location>
</feature>
<feature type="domain" description="Asparagine synthetase">
    <location>
        <begin position="213"/>
        <end position="536"/>
    </location>
</feature>
<feature type="active site" description="For GATase activity" evidence="8 9">
    <location>
        <position position="2"/>
    </location>
</feature>
<feature type="binding site" evidence="1">
    <location>
        <begin position="49"/>
        <end position="53"/>
    </location>
    <ligand>
        <name>L-glutamine</name>
        <dbReference type="ChEBI" id="CHEBI:58359"/>
    </ligand>
</feature>
<feature type="binding site" evidence="1">
    <location>
        <begin position="75"/>
        <end position="77"/>
    </location>
    <ligand>
        <name>L-glutamine</name>
        <dbReference type="ChEBI" id="CHEBI:58359"/>
    </ligand>
</feature>
<feature type="binding site" evidence="1">
    <location>
        <position position="97"/>
    </location>
    <ligand>
        <name>L-glutamine</name>
        <dbReference type="ChEBI" id="CHEBI:58359"/>
    </ligand>
</feature>
<feature type="binding site" evidence="1">
    <location>
        <position position="256"/>
    </location>
    <ligand>
        <name>ATP</name>
        <dbReference type="ChEBI" id="CHEBI:30616"/>
    </ligand>
</feature>
<feature type="binding site" evidence="1">
    <location>
        <position position="288"/>
    </location>
    <ligand>
        <name>ATP</name>
        <dbReference type="ChEBI" id="CHEBI:30616"/>
    </ligand>
</feature>
<feature type="binding site" evidence="1">
    <location>
        <begin position="363"/>
        <end position="364"/>
    </location>
    <ligand>
        <name>ATP</name>
        <dbReference type="ChEBI" id="CHEBI:30616"/>
    </ligand>
</feature>
<feature type="site" description="Important for beta-aspartyl-AMP intermediate formation" evidence="1">
    <location>
        <position position="365"/>
    </location>
</feature>
<feature type="modified residue" description="N6-acetyllysine" evidence="13">
    <location>
        <position position="385"/>
    </location>
</feature>
<feature type="modified residue" description="Phosphothreonine" evidence="14">
    <location>
        <position position="545"/>
    </location>
</feature>
<feature type="modified residue" description="Phosphoserine" evidence="14">
    <location>
        <position position="557"/>
    </location>
</feature>
<feature type="splice variant" id="VSP_045817" description="In isoform 3." evidence="11">
    <location>
        <begin position="1"/>
        <end position="83"/>
    </location>
</feature>
<feature type="splice variant" id="VSP_045818" description="In isoform 2." evidence="11">
    <location>
        <begin position="1"/>
        <end position="21"/>
    </location>
</feature>
<feature type="sequence variant" id="VAR_070896" description="In ASNSD; dramatic reduction in protein abundance; dbSNP:rs398122975." evidence="7">
    <original>A</original>
    <variation>E</variation>
    <location>
        <position position="6"/>
    </location>
</feature>
<feature type="sequence variant" id="VAR_023443" description="In dbSNP:rs1049674." evidence="3 4 5 6 10">
    <original>V</original>
    <variation>E</variation>
    <location>
        <position position="210"/>
    </location>
</feature>
<feature type="sequence variant" id="VAR_070897" description="In ASNSD; dramatic reduction in protein abundance; dbSNP:rs398122973." evidence="7">
    <original>F</original>
    <variation>V</variation>
    <location>
        <position position="362"/>
    </location>
</feature>
<feature type="sequence variant" id="VAR_070898" description="In ASNSD; increases level of protein abundance; dbSNP:rs398122974." evidence="7">
    <original>R</original>
    <variation>C</variation>
    <location>
        <position position="550"/>
    </location>
</feature>
<feature type="mutagenesis site" description="Loss of the glutamine-dependent asparagine synthetase activity, while the ammonia-dependent activity remained unaffected." evidence="9">
    <original>C</original>
    <variation>A</variation>
    <location>
        <position position="2"/>
    </location>
</feature>
<feature type="sequence conflict" description="In Ref. 9; AAA36781." evidence="12" ref="9">
    <original>TYDITTVRASV</original>
    <variation>LMTLQQFVLRI</variation>
    <location>
        <begin position="333"/>
        <end position="343"/>
    </location>
</feature>
<feature type="sequence conflict" description="In Ref. 9; AAA36781." evidence="12" ref="9">
    <original>RKNTDSVV</original>
    <variation>GRTQIAWL</variation>
    <location>
        <begin position="353"/>
        <end position="360"/>
    </location>
</feature>
<feature type="sequence conflict" description="In Ref. 1 and 2." evidence="12" ref="1 2">
    <original>S</original>
    <variation>F</variation>
    <location>
        <position position="426"/>
    </location>
</feature>
<feature type="sequence conflict" description="In Ref. 4; BAG63553." evidence="12" ref="4">
    <original>I</original>
    <variation>V</variation>
    <location>
        <position position="462"/>
    </location>
</feature>
<feature type="strand" evidence="15">
    <location>
        <begin position="3"/>
        <end position="9"/>
    </location>
</feature>
<feature type="helix" evidence="15">
    <location>
        <begin position="15"/>
        <end position="18"/>
    </location>
</feature>
<feature type="helix" evidence="15">
    <location>
        <begin position="20"/>
        <end position="27"/>
    </location>
</feature>
<feature type="strand" evidence="15">
    <location>
        <begin position="30"/>
        <end position="37"/>
    </location>
</feature>
<feature type="strand" evidence="15">
    <location>
        <begin position="40"/>
        <end position="49"/>
    </location>
</feature>
<feature type="turn" evidence="15">
    <location>
        <begin position="55"/>
        <end position="57"/>
    </location>
</feature>
<feature type="strand" evidence="15">
    <location>
        <begin position="60"/>
        <end position="62"/>
    </location>
</feature>
<feature type="strand" evidence="15">
    <location>
        <begin position="70"/>
        <end position="78"/>
    </location>
</feature>
<feature type="helix" evidence="15">
    <location>
        <begin position="81"/>
        <end position="88"/>
    </location>
</feature>
<feature type="helix" evidence="15">
    <location>
        <begin position="99"/>
        <end position="114"/>
    </location>
</feature>
<feature type="strand" evidence="15">
    <location>
        <begin position="119"/>
        <end position="127"/>
    </location>
</feature>
<feature type="turn" evidence="15">
    <location>
        <begin position="128"/>
        <end position="131"/>
    </location>
</feature>
<feature type="strand" evidence="15">
    <location>
        <begin position="132"/>
        <end position="137"/>
    </location>
</feature>
<feature type="strand" evidence="15">
    <location>
        <begin position="146"/>
        <end position="149"/>
    </location>
</feature>
<feature type="turn" evidence="16">
    <location>
        <begin position="151"/>
        <end position="153"/>
    </location>
</feature>
<feature type="strand" evidence="15">
    <location>
        <begin position="155"/>
        <end position="160"/>
    </location>
</feature>
<feature type="helix" evidence="15">
    <location>
        <begin position="161"/>
        <end position="163"/>
    </location>
</feature>
<feature type="turn" evidence="15">
    <location>
        <begin position="164"/>
        <end position="166"/>
    </location>
</feature>
<feature type="strand" evidence="15">
    <location>
        <begin position="177"/>
        <end position="179"/>
    </location>
</feature>
<feature type="strand" evidence="15">
    <location>
        <begin position="184"/>
        <end position="190"/>
    </location>
</feature>
<feature type="strand" evidence="15">
    <location>
        <begin position="196"/>
        <end position="203"/>
    </location>
</feature>
<feature type="helix" evidence="15">
    <location>
        <begin position="228"/>
        <end position="245"/>
    </location>
</feature>
<feature type="strand" evidence="15">
    <location>
        <begin position="250"/>
        <end position="256"/>
    </location>
</feature>
<feature type="helix" evidence="15">
    <location>
        <begin position="261"/>
        <end position="276"/>
    </location>
</feature>
<feature type="strand" evidence="15">
    <location>
        <begin position="284"/>
        <end position="292"/>
    </location>
</feature>
<feature type="helix" evidence="15">
    <location>
        <begin position="294"/>
        <end position="306"/>
    </location>
</feature>
<feature type="strand" evidence="15">
    <location>
        <begin position="309"/>
        <end position="314"/>
    </location>
</feature>
<feature type="helix" evidence="15">
    <location>
        <begin position="317"/>
        <end position="331"/>
    </location>
</feature>
<feature type="helix" evidence="15">
    <location>
        <begin position="336"/>
        <end position="355"/>
    </location>
</feature>
<feature type="strand" evidence="15">
    <location>
        <begin position="358"/>
        <end position="362"/>
    </location>
</feature>
<feature type="helix" evidence="15">
    <location>
        <begin position="367"/>
        <end position="371"/>
    </location>
</feature>
<feature type="helix" evidence="15">
    <location>
        <begin position="375"/>
        <end position="379"/>
    </location>
</feature>
<feature type="helix" evidence="15">
    <location>
        <begin position="383"/>
        <end position="396"/>
    </location>
</feature>
<feature type="turn" evidence="15">
    <location>
        <begin position="397"/>
        <end position="400"/>
    </location>
</feature>
<feature type="helix" evidence="15">
    <location>
        <begin position="401"/>
        <end position="410"/>
    </location>
</feature>
<feature type="turn" evidence="15">
    <location>
        <begin position="411"/>
        <end position="413"/>
    </location>
</feature>
<feature type="strand" evidence="15">
    <location>
        <begin position="415"/>
        <end position="417"/>
    </location>
</feature>
<feature type="helix" evidence="15">
    <location>
        <begin position="419"/>
        <end position="421"/>
    </location>
</feature>
<feature type="helix" evidence="15">
    <location>
        <begin position="423"/>
        <end position="430"/>
    </location>
</feature>
<feature type="helix" evidence="15">
    <location>
        <begin position="434"/>
        <end position="437"/>
    </location>
</feature>
<feature type="strand" evidence="15">
    <location>
        <begin position="440"/>
        <end position="443"/>
    </location>
</feature>
<feature type="helix" evidence="15">
    <location>
        <begin position="446"/>
        <end position="451"/>
    </location>
</feature>
<feature type="turn" evidence="15">
    <location>
        <begin position="452"/>
        <end position="456"/>
    </location>
</feature>
<feature type="helix" evidence="15">
    <location>
        <begin position="460"/>
        <end position="463"/>
    </location>
</feature>
<feature type="helix" evidence="15">
    <location>
        <begin position="481"/>
        <end position="492"/>
    </location>
</feature>
<feature type="helix" evidence="15">
    <location>
        <begin position="495"/>
        <end position="499"/>
    </location>
</feature>
<feature type="helix" evidence="15">
    <location>
        <begin position="501"/>
        <end position="504"/>
    </location>
</feature>
<feature type="helix" evidence="15">
    <location>
        <begin position="513"/>
        <end position="525"/>
    </location>
</feature>
<feature type="helix" evidence="15">
    <location>
        <begin position="530"/>
        <end position="532"/>
    </location>
</feature>